<dbReference type="EMBL" id="CP000304">
    <property type="protein sequence ID" value="ABP78483.1"/>
    <property type="molecule type" value="Genomic_DNA"/>
</dbReference>
<dbReference type="RefSeq" id="WP_003281842.1">
    <property type="nucleotide sequence ID" value="NC_009434.1"/>
</dbReference>
<dbReference type="SMR" id="A4VHN2"/>
<dbReference type="GeneID" id="75213387"/>
<dbReference type="KEGG" id="psa:PST_0786"/>
<dbReference type="eggNOG" id="COG0089">
    <property type="taxonomic scope" value="Bacteria"/>
</dbReference>
<dbReference type="HOGENOM" id="CLU_037562_3_1_6"/>
<dbReference type="Proteomes" id="UP000000233">
    <property type="component" value="Chromosome"/>
</dbReference>
<dbReference type="GO" id="GO:1990904">
    <property type="term" value="C:ribonucleoprotein complex"/>
    <property type="evidence" value="ECO:0007669"/>
    <property type="project" value="UniProtKB-KW"/>
</dbReference>
<dbReference type="GO" id="GO:0005840">
    <property type="term" value="C:ribosome"/>
    <property type="evidence" value="ECO:0007669"/>
    <property type="project" value="UniProtKB-KW"/>
</dbReference>
<dbReference type="GO" id="GO:0019843">
    <property type="term" value="F:rRNA binding"/>
    <property type="evidence" value="ECO:0007669"/>
    <property type="project" value="UniProtKB-UniRule"/>
</dbReference>
<dbReference type="GO" id="GO:0003735">
    <property type="term" value="F:structural constituent of ribosome"/>
    <property type="evidence" value="ECO:0007669"/>
    <property type="project" value="InterPro"/>
</dbReference>
<dbReference type="GO" id="GO:0006412">
    <property type="term" value="P:translation"/>
    <property type="evidence" value="ECO:0007669"/>
    <property type="project" value="UniProtKB-UniRule"/>
</dbReference>
<dbReference type="FunFam" id="3.30.70.330:FF:000001">
    <property type="entry name" value="50S ribosomal protein L23"/>
    <property type="match status" value="1"/>
</dbReference>
<dbReference type="Gene3D" id="3.30.70.330">
    <property type="match status" value="1"/>
</dbReference>
<dbReference type="HAMAP" id="MF_01369_B">
    <property type="entry name" value="Ribosomal_uL23_B"/>
    <property type="match status" value="1"/>
</dbReference>
<dbReference type="InterPro" id="IPR012677">
    <property type="entry name" value="Nucleotide-bd_a/b_plait_sf"/>
</dbReference>
<dbReference type="InterPro" id="IPR013025">
    <property type="entry name" value="Ribosomal_uL23-like"/>
</dbReference>
<dbReference type="InterPro" id="IPR012678">
    <property type="entry name" value="Ribosomal_uL23/eL15/eS24_sf"/>
</dbReference>
<dbReference type="NCBIfam" id="NF004358">
    <property type="entry name" value="PRK05738.1-1"/>
    <property type="match status" value="1"/>
</dbReference>
<dbReference type="NCBIfam" id="NF004359">
    <property type="entry name" value="PRK05738.1-3"/>
    <property type="match status" value="1"/>
</dbReference>
<dbReference type="NCBIfam" id="NF004363">
    <property type="entry name" value="PRK05738.2-4"/>
    <property type="match status" value="1"/>
</dbReference>
<dbReference type="PANTHER" id="PTHR11620">
    <property type="entry name" value="60S RIBOSOMAL PROTEIN L23A"/>
    <property type="match status" value="1"/>
</dbReference>
<dbReference type="Pfam" id="PF00276">
    <property type="entry name" value="Ribosomal_L23"/>
    <property type="match status" value="1"/>
</dbReference>
<dbReference type="SUPFAM" id="SSF54189">
    <property type="entry name" value="Ribosomal proteins S24e, L23 and L15e"/>
    <property type="match status" value="1"/>
</dbReference>
<sequence length="99" mass="10920">MNQERVFKVLLGPHVSEKATVLADSKKQFVFKVATDATKLEIKKAVESLFDVKVAAVNTLNVQGKTKRTARGLGKRNDWKKAYIALQPGQDLDFSGSAE</sequence>
<keyword id="KW-1185">Reference proteome</keyword>
<keyword id="KW-0687">Ribonucleoprotein</keyword>
<keyword id="KW-0689">Ribosomal protein</keyword>
<keyword id="KW-0694">RNA-binding</keyword>
<keyword id="KW-0699">rRNA-binding</keyword>
<reference key="1">
    <citation type="journal article" date="2008" name="Proc. Natl. Acad. Sci. U.S.A.">
        <title>Nitrogen fixation island and rhizosphere competence traits in the genome of root-associated Pseudomonas stutzeri A1501.</title>
        <authorList>
            <person name="Yan Y."/>
            <person name="Yang J."/>
            <person name="Dou Y."/>
            <person name="Chen M."/>
            <person name="Ping S."/>
            <person name="Peng J."/>
            <person name="Lu W."/>
            <person name="Zhang W."/>
            <person name="Yao Z."/>
            <person name="Li H."/>
            <person name="Liu W."/>
            <person name="He S."/>
            <person name="Geng L."/>
            <person name="Zhang X."/>
            <person name="Yang F."/>
            <person name="Yu H."/>
            <person name="Zhan Y."/>
            <person name="Li D."/>
            <person name="Lin Z."/>
            <person name="Wang Y."/>
            <person name="Elmerich C."/>
            <person name="Lin M."/>
            <person name="Jin Q."/>
        </authorList>
    </citation>
    <scope>NUCLEOTIDE SEQUENCE [LARGE SCALE GENOMIC DNA]</scope>
    <source>
        <strain>A1501</strain>
    </source>
</reference>
<accession>A4VHN2</accession>
<proteinExistence type="inferred from homology"/>
<organism>
    <name type="scientific">Stutzerimonas stutzeri (strain A1501)</name>
    <name type="common">Pseudomonas stutzeri</name>
    <dbReference type="NCBI Taxonomy" id="379731"/>
    <lineage>
        <taxon>Bacteria</taxon>
        <taxon>Pseudomonadati</taxon>
        <taxon>Pseudomonadota</taxon>
        <taxon>Gammaproteobacteria</taxon>
        <taxon>Pseudomonadales</taxon>
        <taxon>Pseudomonadaceae</taxon>
        <taxon>Stutzerimonas</taxon>
    </lineage>
</organism>
<comment type="function">
    <text evidence="1">One of the early assembly proteins it binds 23S rRNA. One of the proteins that surrounds the polypeptide exit tunnel on the outside of the ribosome. Forms the main docking site for trigger factor binding to the ribosome.</text>
</comment>
<comment type="subunit">
    <text evidence="1">Part of the 50S ribosomal subunit. Contacts protein L29, and trigger factor when it is bound to the ribosome.</text>
</comment>
<comment type="similarity">
    <text evidence="1">Belongs to the universal ribosomal protein uL23 family.</text>
</comment>
<gene>
    <name evidence="1" type="primary">rplW</name>
    <name type="ordered locus">PST_0786</name>
</gene>
<protein>
    <recommendedName>
        <fullName evidence="1">Large ribosomal subunit protein uL23</fullName>
    </recommendedName>
    <alternativeName>
        <fullName evidence="2">50S ribosomal protein L23</fullName>
    </alternativeName>
</protein>
<evidence type="ECO:0000255" key="1">
    <source>
        <dbReference type="HAMAP-Rule" id="MF_01369"/>
    </source>
</evidence>
<evidence type="ECO:0000305" key="2"/>
<name>RL23_STUS1</name>
<feature type="chain" id="PRO_1000068143" description="Large ribosomal subunit protein uL23">
    <location>
        <begin position="1"/>
        <end position="99"/>
    </location>
</feature>